<proteinExistence type="evidence at transcript level"/>
<dbReference type="EMBL" id="BC083453">
    <property type="protein sequence ID" value="AAH83453.1"/>
    <property type="molecule type" value="mRNA"/>
</dbReference>
<dbReference type="EMBL" id="BC153570">
    <property type="protein sequence ID" value="AAI53571.1"/>
    <property type="molecule type" value="mRNA"/>
</dbReference>
<dbReference type="RefSeq" id="NP_001005950.1">
    <property type="nucleotide sequence ID" value="NM_001005950.1"/>
</dbReference>
<dbReference type="SMR" id="Q5XJ54"/>
<dbReference type="FunCoup" id="Q5XJ54">
    <property type="interactions" value="2863"/>
</dbReference>
<dbReference type="STRING" id="7955.ENSDARP00000133690"/>
<dbReference type="PaxDb" id="7955-ENSDARP00000040389"/>
<dbReference type="GeneID" id="449777"/>
<dbReference type="KEGG" id="dre:449777"/>
<dbReference type="AGR" id="ZFIN:ZDB-GENE-041010-22"/>
<dbReference type="CTD" id="10539"/>
<dbReference type="ZFIN" id="ZDB-GENE-041010-22">
    <property type="gene designation" value="glrx3"/>
</dbReference>
<dbReference type="eggNOG" id="KOG0911">
    <property type="taxonomic scope" value="Eukaryota"/>
</dbReference>
<dbReference type="InParanoid" id="Q5XJ54"/>
<dbReference type="OrthoDB" id="415696at2759"/>
<dbReference type="PhylomeDB" id="Q5XJ54"/>
<dbReference type="PRO" id="PR:Q5XJ54"/>
<dbReference type="Proteomes" id="UP000000437">
    <property type="component" value="Chromosome 12"/>
</dbReference>
<dbReference type="GO" id="GO:0005829">
    <property type="term" value="C:cytosol"/>
    <property type="evidence" value="ECO:0000318"/>
    <property type="project" value="GO_Central"/>
</dbReference>
<dbReference type="GO" id="GO:0005634">
    <property type="term" value="C:nucleus"/>
    <property type="evidence" value="ECO:0000318"/>
    <property type="project" value="GO_Central"/>
</dbReference>
<dbReference type="GO" id="GO:0051536">
    <property type="term" value="F:iron-sulfur cluster binding"/>
    <property type="evidence" value="ECO:0007669"/>
    <property type="project" value="UniProtKB-KW"/>
</dbReference>
<dbReference type="GO" id="GO:0046872">
    <property type="term" value="F:metal ion binding"/>
    <property type="evidence" value="ECO:0007669"/>
    <property type="project" value="UniProtKB-KW"/>
</dbReference>
<dbReference type="GO" id="GO:0020027">
    <property type="term" value="P:hemoglobin metabolic process"/>
    <property type="evidence" value="ECO:0000315"/>
    <property type="project" value="ZFIN"/>
</dbReference>
<dbReference type="GO" id="GO:0006879">
    <property type="term" value="P:intracellular iron ion homeostasis"/>
    <property type="evidence" value="ECO:0000318"/>
    <property type="project" value="GO_Central"/>
</dbReference>
<dbReference type="GO" id="GO:0060586">
    <property type="term" value="P:multicellular organismal-level iron ion homeostasis"/>
    <property type="evidence" value="ECO:0000315"/>
    <property type="project" value="ZFIN"/>
</dbReference>
<dbReference type="CDD" id="cd03028">
    <property type="entry name" value="GRX_PICOT_like"/>
    <property type="match status" value="2"/>
</dbReference>
<dbReference type="CDD" id="cd02984">
    <property type="entry name" value="TRX_PICOT"/>
    <property type="match status" value="1"/>
</dbReference>
<dbReference type="FunFam" id="3.40.30.10:FF:000165">
    <property type="entry name" value="glutaredoxin-3 isoform X1"/>
    <property type="match status" value="1"/>
</dbReference>
<dbReference type="FunFam" id="3.40.30.10:FF:000012">
    <property type="entry name" value="Monothiol glutaredoxin"/>
    <property type="match status" value="2"/>
</dbReference>
<dbReference type="Gene3D" id="3.40.30.10">
    <property type="entry name" value="Glutaredoxin"/>
    <property type="match status" value="3"/>
</dbReference>
<dbReference type="InterPro" id="IPR002109">
    <property type="entry name" value="Glutaredoxin"/>
</dbReference>
<dbReference type="InterPro" id="IPR033658">
    <property type="entry name" value="GRX_PICOT-like"/>
</dbReference>
<dbReference type="InterPro" id="IPR004480">
    <property type="entry name" value="Monothiol_GRX-rel"/>
</dbReference>
<dbReference type="InterPro" id="IPR036249">
    <property type="entry name" value="Thioredoxin-like_sf"/>
</dbReference>
<dbReference type="InterPro" id="IPR013766">
    <property type="entry name" value="Thioredoxin_domain"/>
</dbReference>
<dbReference type="NCBIfam" id="TIGR00365">
    <property type="entry name" value="Grx4 family monothiol glutaredoxin"/>
    <property type="match status" value="2"/>
</dbReference>
<dbReference type="PANTHER" id="PTHR10293">
    <property type="entry name" value="GLUTAREDOXIN FAMILY MEMBER"/>
    <property type="match status" value="1"/>
</dbReference>
<dbReference type="PANTHER" id="PTHR10293:SF73">
    <property type="entry name" value="GLUTAREDOXIN-3"/>
    <property type="match status" value="1"/>
</dbReference>
<dbReference type="Pfam" id="PF00462">
    <property type="entry name" value="Glutaredoxin"/>
    <property type="match status" value="2"/>
</dbReference>
<dbReference type="Pfam" id="PF00085">
    <property type="entry name" value="Thioredoxin"/>
    <property type="match status" value="1"/>
</dbReference>
<dbReference type="SUPFAM" id="SSF52833">
    <property type="entry name" value="Thioredoxin-like"/>
    <property type="match status" value="3"/>
</dbReference>
<dbReference type="PROSITE" id="PS51354">
    <property type="entry name" value="GLUTAREDOXIN_2"/>
    <property type="match status" value="2"/>
</dbReference>
<dbReference type="PROSITE" id="PS51352">
    <property type="entry name" value="THIOREDOXIN_2"/>
    <property type="match status" value="1"/>
</dbReference>
<accession>Q5XJ54</accession>
<name>GLRX3_DANRE</name>
<keyword id="KW-0963">Cytoplasm</keyword>
<keyword id="KW-0408">Iron</keyword>
<keyword id="KW-0411">Iron-sulfur</keyword>
<keyword id="KW-0479">Metal-binding</keyword>
<keyword id="KW-1185">Reference proteome</keyword>
<keyword id="KW-0677">Repeat</keyword>
<reference key="1">
    <citation type="submission" date="2004-10" db="EMBL/GenBank/DDBJ databases">
        <authorList>
            <consortium name="NIH - Zebrafish Gene Collection (ZGC) project"/>
        </authorList>
    </citation>
    <scope>NUCLEOTIDE SEQUENCE [LARGE SCALE MRNA]</scope>
    <source>
        <tissue>Larva</tissue>
    </source>
</reference>
<reference key="2">
    <citation type="journal article" date="2013" name="Mol. Biol. Cell">
        <title>Crucial function of vertebrate glutaredoxin 3 (PICOT) in iron homeostasis and hemoglobin maturation.</title>
        <authorList>
            <person name="Haunhorst P."/>
            <person name="Hanschmann E.M."/>
            <person name="Brautigam L."/>
            <person name="Stehling O."/>
            <person name="Hoffmann B."/>
            <person name="Muhlenhoff U."/>
            <person name="Lill R."/>
            <person name="Berndt C."/>
            <person name="Lillig C.H."/>
        </authorList>
    </citation>
    <scope>FUNCTION</scope>
    <scope>DISRUPTION PHENOTYPE</scope>
</reference>
<comment type="function">
    <text evidence="1 2 5">Together with bola2, acts as a cytosolic iron-sulfur (Fe-S) cluster assembly factor that facilitates [2Fe-2S] cluster insertion into a subset of cytosolic proteins (By similarity). Required for hemoglobin maturation (PubMed:23615448). Does not possess any thyoredoxin activity since it lacks the conserved motif that is essential for catalytic activity (By similarity).</text>
</comment>
<comment type="subunit">
    <text evidence="1 2">Homodimer; the homodimer is independent of 2Fe-2S clusters. Heterotrimer; forms a heterotrimeric complex composed by two bola2 molecules and one glrx3 molecule; linked by [2Fe-2S] clusters.</text>
</comment>
<comment type="subcellular location">
    <subcellularLocation>
        <location evidence="1">Cytoplasm</location>
        <location evidence="1">Cytosol</location>
    </subcellularLocation>
</comment>
<comment type="domain">
    <text>The thioredoxin domain lacks the two redox-active cysteines. This strongly suggests that it lacks thioredoxin activity.</text>
</comment>
<comment type="disruption phenotype">
    <text evidence="5">Morpholino knockdown in embryos reducing the levels of grx3 protein to 40% severely impairs the synthesis of heme and the maturation of hemoglobin, and results in individuals with fewer red blood cells.</text>
</comment>
<organism>
    <name type="scientific">Danio rerio</name>
    <name type="common">Zebrafish</name>
    <name type="synonym">Brachydanio rerio</name>
    <dbReference type="NCBI Taxonomy" id="7955"/>
    <lineage>
        <taxon>Eukaryota</taxon>
        <taxon>Metazoa</taxon>
        <taxon>Chordata</taxon>
        <taxon>Craniata</taxon>
        <taxon>Vertebrata</taxon>
        <taxon>Euteleostomi</taxon>
        <taxon>Actinopterygii</taxon>
        <taxon>Neopterygii</taxon>
        <taxon>Teleostei</taxon>
        <taxon>Ostariophysi</taxon>
        <taxon>Cypriniformes</taxon>
        <taxon>Danionidae</taxon>
        <taxon>Danioninae</taxon>
        <taxon>Danio</taxon>
    </lineage>
</organism>
<gene>
    <name type="primary">glrx3</name>
    <name type="synonym">txnl2</name>
</gene>
<protein>
    <recommendedName>
        <fullName>Glutaredoxin 3</fullName>
    </recommendedName>
</protein>
<sequence length="326" mass="36335">MANFTDAASLQQFDELLKNNSKSLTVVHFHAPWAPQCSQMNDVMAELAKEHKHTMFVKLEAEAVPEVSEKYEITSVPTFLFFKGGEKIDRLDGAHAPELTNKVQRLGSGGGGAVGAGDVPKEDLNQRLKRLINAAPCMLFMKGSPQEPRCGFSRQIIQILKDHNVQYSSFDILSDEEVRQGLKTYSNWPTYPQVYVSGELIGGLDIVKELVESGELENTFPKTVSLENRLKSLINKSPVMLFMKGNKEAAKCGFSRQILEIMNNTGVEYDTFDILEDEEVRQGLKTYSNWPTFPQLYVKGDLIGGLDIVKELLEGGELVSVLKGEN</sequence>
<feature type="chain" id="PRO_0000348927" description="Glutaredoxin 3">
    <location>
        <begin position="1"/>
        <end position="326"/>
    </location>
</feature>
<feature type="domain" description="Thioredoxin" evidence="4">
    <location>
        <begin position="1"/>
        <end position="108"/>
    </location>
</feature>
<feature type="domain" description="Glutaredoxin 1" evidence="3">
    <location>
        <begin position="125"/>
        <end position="227"/>
    </location>
</feature>
<feature type="domain" description="Glutaredoxin 2" evidence="3">
    <location>
        <begin position="227"/>
        <end position="326"/>
    </location>
</feature>
<feature type="binding site" evidence="1">
    <location>
        <position position="150"/>
    </location>
    <ligand>
        <name>[2Fe-2S] cluster</name>
        <dbReference type="ChEBI" id="CHEBI:190135"/>
        <note>ligand shared between dimeric partners</note>
    </ligand>
</feature>
<feature type="binding site" evidence="1">
    <location>
        <position position="252"/>
    </location>
    <ligand>
        <name>[2Fe-2S] cluster</name>
        <dbReference type="ChEBI" id="CHEBI:190135"/>
        <note>ligand shared between dimeric partners</note>
    </ligand>
</feature>
<evidence type="ECO:0000250" key="1">
    <source>
        <dbReference type="UniProtKB" id="O76003"/>
    </source>
</evidence>
<evidence type="ECO:0000250" key="2">
    <source>
        <dbReference type="UniProtKB" id="Q9CQM9"/>
    </source>
</evidence>
<evidence type="ECO:0000255" key="3">
    <source>
        <dbReference type="PROSITE-ProRule" id="PRU00686"/>
    </source>
</evidence>
<evidence type="ECO:0000255" key="4">
    <source>
        <dbReference type="PROSITE-ProRule" id="PRU00691"/>
    </source>
</evidence>
<evidence type="ECO:0000269" key="5">
    <source>
    </source>
</evidence>